<comment type="function">
    <text evidence="1">Represses a number of genes involved in the response to DNA damage (SOS response), including recA and lexA. In the presence of single-stranded DNA, RecA interacts with LexA causing an autocatalytic cleavage which disrupts the DNA-binding part of LexA, leading to derepression of the SOS regulon and eventually DNA repair.</text>
</comment>
<comment type="catalytic activity">
    <reaction evidence="1">
        <text>Hydrolysis of Ala-|-Gly bond in repressor LexA.</text>
        <dbReference type="EC" id="3.4.21.88"/>
    </reaction>
</comment>
<comment type="subunit">
    <text evidence="1">Homodimer.</text>
</comment>
<comment type="similarity">
    <text evidence="1">Belongs to the peptidase S24 family.</text>
</comment>
<comment type="sequence caution" evidence="3">
    <conflict type="erroneous initiation">
        <sequence resource="EMBL-CDS" id="CAA12169"/>
    </conflict>
</comment>
<gene>
    <name evidence="1" type="primary">lexA</name>
</gene>
<name>LEXA_STRCL</name>
<feature type="chain" id="PRO_0000170095" description="LexA repressor">
    <location>
        <begin position="1"/>
        <end position="239"/>
    </location>
</feature>
<feature type="DNA-binding region" description="H-T-H motif" evidence="1">
    <location>
        <begin position="58"/>
        <end position="78"/>
    </location>
</feature>
<feature type="region of interest" description="Disordered" evidence="2">
    <location>
        <begin position="1"/>
        <end position="40"/>
    </location>
</feature>
<feature type="region of interest" description="Disordered" evidence="2">
    <location>
        <begin position="89"/>
        <end position="116"/>
    </location>
</feature>
<feature type="compositionally biased region" description="Basic and acidic residues" evidence="2">
    <location>
        <begin position="89"/>
        <end position="100"/>
    </location>
</feature>
<feature type="active site" description="For autocatalytic cleavage activity" evidence="1">
    <location>
        <position position="163"/>
    </location>
</feature>
<feature type="active site" description="For autocatalytic cleavage activity" evidence="1">
    <location>
        <position position="200"/>
    </location>
</feature>
<feature type="site" description="Cleavage; by autolysis" evidence="1">
    <location>
        <begin position="128"/>
        <end position="129"/>
    </location>
</feature>
<accession>O86847</accession>
<keyword id="KW-0068">Autocatalytic cleavage</keyword>
<keyword id="KW-0227">DNA damage</keyword>
<keyword id="KW-0234">DNA repair</keyword>
<keyword id="KW-0235">DNA replication</keyword>
<keyword id="KW-0238">DNA-binding</keyword>
<keyword id="KW-0378">Hydrolase</keyword>
<keyword id="KW-0678">Repressor</keyword>
<keyword id="KW-0742">SOS response</keyword>
<keyword id="KW-0804">Transcription</keyword>
<keyword id="KW-0805">Transcription regulation</keyword>
<evidence type="ECO:0000255" key="1">
    <source>
        <dbReference type="HAMAP-Rule" id="MF_00015"/>
    </source>
</evidence>
<evidence type="ECO:0000256" key="2">
    <source>
        <dbReference type="SAM" id="MobiDB-lite"/>
    </source>
</evidence>
<evidence type="ECO:0000305" key="3"/>
<dbReference type="EC" id="3.4.21.88" evidence="1"/>
<dbReference type="EMBL" id="AJ224870">
    <property type="protein sequence ID" value="CAA12169.1"/>
    <property type="status" value="ALT_INIT"/>
    <property type="molecule type" value="Genomic_DNA"/>
</dbReference>
<dbReference type="RefSeq" id="WP_003962101.1">
    <property type="nucleotide sequence ID" value="NZ_WMBZ01000032.1"/>
</dbReference>
<dbReference type="SMR" id="O86847"/>
<dbReference type="STRING" id="1901.BB341_05490"/>
<dbReference type="MEROPS" id="S24.001"/>
<dbReference type="GeneID" id="93728862"/>
<dbReference type="eggNOG" id="COG1974">
    <property type="taxonomic scope" value="Bacteria"/>
</dbReference>
<dbReference type="OrthoDB" id="9802364at2"/>
<dbReference type="GO" id="GO:0003677">
    <property type="term" value="F:DNA binding"/>
    <property type="evidence" value="ECO:0007669"/>
    <property type="project" value="UniProtKB-UniRule"/>
</dbReference>
<dbReference type="GO" id="GO:0004252">
    <property type="term" value="F:serine-type endopeptidase activity"/>
    <property type="evidence" value="ECO:0007669"/>
    <property type="project" value="UniProtKB-UniRule"/>
</dbReference>
<dbReference type="GO" id="GO:0006281">
    <property type="term" value="P:DNA repair"/>
    <property type="evidence" value="ECO:0007669"/>
    <property type="project" value="UniProtKB-UniRule"/>
</dbReference>
<dbReference type="GO" id="GO:0006260">
    <property type="term" value="P:DNA replication"/>
    <property type="evidence" value="ECO:0007669"/>
    <property type="project" value="UniProtKB-UniRule"/>
</dbReference>
<dbReference type="GO" id="GO:0045892">
    <property type="term" value="P:negative regulation of DNA-templated transcription"/>
    <property type="evidence" value="ECO:0007669"/>
    <property type="project" value="UniProtKB-UniRule"/>
</dbReference>
<dbReference type="GO" id="GO:0006508">
    <property type="term" value="P:proteolysis"/>
    <property type="evidence" value="ECO:0007669"/>
    <property type="project" value="InterPro"/>
</dbReference>
<dbReference type="GO" id="GO:0009432">
    <property type="term" value="P:SOS response"/>
    <property type="evidence" value="ECO:0007669"/>
    <property type="project" value="UniProtKB-UniRule"/>
</dbReference>
<dbReference type="CDD" id="cd06529">
    <property type="entry name" value="S24_LexA-like"/>
    <property type="match status" value="1"/>
</dbReference>
<dbReference type="FunFam" id="1.10.10.10:FF:000009">
    <property type="entry name" value="LexA repressor"/>
    <property type="match status" value="1"/>
</dbReference>
<dbReference type="FunFam" id="2.10.109.10:FF:000001">
    <property type="entry name" value="LexA repressor"/>
    <property type="match status" value="1"/>
</dbReference>
<dbReference type="Gene3D" id="2.10.109.10">
    <property type="entry name" value="Umud Fragment, subunit A"/>
    <property type="match status" value="1"/>
</dbReference>
<dbReference type="Gene3D" id="1.10.10.10">
    <property type="entry name" value="Winged helix-like DNA-binding domain superfamily/Winged helix DNA-binding domain"/>
    <property type="match status" value="1"/>
</dbReference>
<dbReference type="HAMAP" id="MF_00015">
    <property type="entry name" value="LexA"/>
    <property type="match status" value="1"/>
</dbReference>
<dbReference type="InterPro" id="IPR006200">
    <property type="entry name" value="LexA"/>
</dbReference>
<dbReference type="InterPro" id="IPR039418">
    <property type="entry name" value="LexA-like"/>
</dbReference>
<dbReference type="InterPro" id="IPR036286">
    <property type="entry name" value="LexA/Signal_pep-like_sf"/>
</dbReference>
<dbReference type="InterPro" id="IPR006199">
    <property type="entry name" value="LexA_DNA-bd_dom"/>
</dbReference>
<dbReference type="InterPro" id="IPR050077">
    <property type="entry name" value="LexA_repressor"/>
</dbReference>
<dbReference type="InterPro" id="IPR006197">
    <property type="entry name" value="Peptidase_S24_LexA"/>
</dbReference>
<dbReference type="InterPro" id="IPR015927">
    <property type="entry name" value="Peptidase_S24_S26A/B/C"/>
</dbReference>
<dbReference type="InterPro" id="IPR036388">
    <property type="entry name" value="WH-like_DNA-bd_sf"/>
</dbReference>
<dbReference type="InterPro" id="IPR036390">
    <property type="entry name" value="WH_DNA-bd_sf"/>
</dbReference>
<dbReference type="NCBIfam" id="TIGR00498">
    <property type="entry name" value="lexA"/>
    <property type="match status" value="1"/>
</dbReference>
<dbReference type="PANTHER" id="PTHR33516">
    <property type="entry name" value="LEXA REPRESSOR"/>
    <property type="match status" value="1"/>
</dbReference>
<dbReference type="PANTHER" id="PTHR33516:SF2">
    <property type="entry name" value="LEXA REPRESSOR-RELATED"/>
    <property type="match status" value="1"/>
</dbReference>
<dbReference type="Pfam" id="PF01726">
    <property type="entry name" value="LexA_DNA_bind"/>
    <property type="match status" value="1"/>
</dbReference>
<dbReference type="Pfam" id="PF00717">
    <property type="entry name" value="Peptidase_S24"/>
    <property type="match status" value="1"/>
</dbReference>
<dbReference type="PRINTS" id="PR00726">
    <property type="entry name" value="LEXASERPTASE"/>
</dbReference>
<dbReference type="SUPFAM" id="SSF51306">
    <property type="entry name" value="LexA/Signal peptidase"/>
    <property type="match status" value="1"/>
</dbReference>
<dbReference type="SUPFAM" id="SSF46785">
    <property type="entry name" value="Winged helix' DNA-binding domain"/>
    <property type="match status" value="1"/>
</dbReference>
<proteinExistence type="inferred from homology"/>
<sequence length="239" mass="25681">MTEAATGPEGADPSRAARSLPGRPPGIRADSSGLTDRQRRVIEVIRDSVQRRGYPPSMREIGQAVGLSSTSSVAHQLMALERKGFLRRDPHRPRAYEVRGSDQPSAQPADTSGKPAASYVPLVGRIAAGGPILAEESVEDVFPLPRQLVGDGELFVLKVVGDSMIEAAICDGDWVTVRRQPVAENGDIVAAMLDGEATVKRFKRENGHVWLLPHNAAYQPIPGDDATILGKVVAVLRRV</sequence>
<reference key="1">
    <citation type="submission" date="1998-07" db="EMBL/GenBank/DDBJ databases">
        <title>Streptomyces clavuligerus vitamin B12-dependent ribonucleotide reductase enzyme: from protein to gene.</title>
        <authorList>
            <person name="Kreisberg-Zakarin R."/>
            <person name="Borovok I."/>
            <person name="Schreiber R."/>
            <person name="Holmgren A."/>
            <person name="Aslund F."/>
            <person name="Reichard P."/>
            <person name="Cohen G."/>
            <person name="Aharonowitz Y."/>
        </authorList>
    </citation>
    <scope>NUCLEOTIDE SEQUENCE [GENOMIC DNA]</scope>
    <source>
        <strain>ATCC 27064 / DSM 738 / JCM 4710 / NBRC 13307 / NCIMB 12785 / NRRL 3585 / VKM Ac-602</strain>
    </source>
</reference>
<protein>
    <recommendedName>
        <fullName evidence="1">LexA repressor</fullName>
        <ecNumber evidence="1">3.4.21.88</ecNumber>
    </recommendedName>
</protein>
<organism>
    <name type="scientific">Streptomyces clavuligerus</name>
    <dbReference type="NCBI Taxonomy" id="1901"/>
    <lineage>
        <taxon>Bacteria</taxon>
        <taxon>Bacillati</taxon>
        <taxon>Actinomycetota</taxon>
        <taxon>Actinomycetes</taxon>
        <taxon>Kitasatosporales</taxon>
        <taxon>Streptomycetaceae</taxon>
        <taxon>Streptomyces</taxon>
    </lineage>
</organism>